<keyword id="KW-0963">Cytoplasm</keyword>
<keyword id="KW-1015">Disulfide bond</keyword>
<keyword id="KW-0256">Endoplasmic reticulum</keyword>
<keyword id="KW-0275">Fatty acid biosynthesis</keyword>
<keyword id="KW-0276">Fatty acid metabolism</keyword>
<keyword id="KW-0325">Glycoprotein</keyword>
<keyword id="KW-0333">Golgi apparatus</keyword>
<keyword id="KW-0413">Isomerase</keyword>
<keyword id="KW-0444">Lipid biosynthesis</keyword>
<keyword id="KW-0443">Lipid metabolism</keyword>
<keyword id="KW-0467">Mast cell degranulation</keyword>
<keyword id="KW-0472">Membrane</keyword>
<keyword id="KW-0539">Nucleus</keyword>
<keyword id="KW-0643">Prostaglandin biosynthesis</keyword>
<keyword id="KW-0644">Prostaglandin metabolism</keyword>
<keyword id="KW-0873">Pyrrolidone carboxylic acid</keyword>
<keyword id="KW-1185">Reference proteome</keyword>
<keyword id="KW-0964">Secreted</keyword>
<keyword id="KW-0732">Signal</keyword>
<keyword id="KW-0813">Transport</keyword>
<proteinExistence type="evidence at transcript level"/>
<organism>
    <name type="scientific">Felis catus</name>
    <name type="common">Cat</name>
    <name type="synonym">Felis silvestris catus</name>
    <dbReference type="NCBI Taxonomy" id="9685"/>
    <lineage>
        <taxon>Eukaryota</taxon>
        <taxon>Metazoa</taxon>
        <taxon>Chordata</taxon>
        <taxon>Craniata</taxon>
        <taxon>Vertebrata</taxon>
        <taxon>Euteleostomi</taxon>
        <taxon>Mammalia</taxon>
        <taxon>Eutheria</taxon>
        <taxon>Laurasiatheria</taxon>
        <taxon>Carnivora</taxon>
        <taxon>Feliformia</taxon>
        <taxon>Felidae</taxon>
        <taxon>Felinae</taxon>
        <taxon>Felis</taxon>
    </lineage>
</organism>
<comment type="function">
    <text evidence="1 2 4">Catalyzes the conversion of PGH2 to PGD2, a prostaglandin involved in smooth muscle contraction/relaxation and a potent inhibitor of platelet aggregation. Involved in a variety of CNS functions, such as sedation, NREM sleep and PGE2-induced allodynia, and may have an anti-apoptotic role in oligodendrocytes. Binds small non-substrate lipophilic molecules, including biliverdin, bilirubin, retinal, retinoic acid and thyroid hormone, and may act as a scavenger for harmful hydrophobic molecules and as a secretory retinoid and thyroid hormone transporter. Possibly involved in development and maintenance of the blood-brain, blood-retina, blood-aqueous humor and blood-testis barrier. It is likely to play important roles in both maturation and maintenance of the central nervous system and male reproductive system (By similarity). Involved in PLA2G3-dependent maturation of mast cells. PLA2G3 is secreted by immature mast cells and acts on nearby fibroblasts upstream to PTDGS to synthesize PGD2, which in turn promotes mast cell maturation and degranulation via PTGDR (By similarity).</text>
</comment>
<comment type="catalytic activity">
    <reaction evidence="4">
        <text>prostaglandin H2 = prostaglandin D2</text>
        <dbReference type="Rhea" id="RHEA:10600"/>
        <dbReference type="ChEBI" id="CHEBI:57405"/>
        <dbReference type="ChEBI" id="CHEBI:57406"/>
        <dbReference type="EC" id="5.3.99.2"/>
    </reaction>
</comment>
<comment type="subunit">
    <text evidence="4">Monomer.</text>
</comment>
<comment type="subcellular location">
    <subcellularLocation>
        <location evidence="4">Rough endoplasmic reticulum</location>
    </subcellularLocation>
    <subcellularLocation>
        <location evidence="4">Nucleus membrane</location>
    </subcellularLocation>
    <subcellularLocation>
        <location evidence="4">Golgi apparatus</location>
    </subcellularLocation>
    <subcellularLocation>
        <location evidence="4">Cytoplasm</location>
        <location evidence="4">Perinuclear region</location>
    </subcellularLocation>
    <subcellularLocation>
        <location evidence="4">Secreted</location>
    </subcellularLocation>
    <text evidence="4">Detected on rough endoplasmic reticulum of arachnoid and menigioma cells. Localized to the nuclear envelope, Golgi apparatus, secretory vesicles and spherical cytoplasmic structures in arachnoid trabecular cells, and to circular cytoplasmic structures in meningeal macrophages and perivascular microglial cells. In oligodendrocytes, localized to the rough endoplasmic reticulum and nuclear envelope. In retinal pigment epithelial cells, localized to distinct cytoplasmic domains including the perinuclear region. Also secreted.</text>
</comment>
<comment type="domain">
    <text evidence="4">Forms a beta-barrel structure that accommodates hydrophobic ligands in its interior.</text>
</comment>
<comment type="PTM">
    <text evidence="4">N- and O-glycosylated. Both N-glycosylation recognition sites are almost quantitatively occupied by N-glycans of the biantennary complex type, with a considerable proportion of structures bearing a bisecting GlcNAc. N-glycan at Asn-78: dHex1Hex5HexNAc4. Agalacto structure as well as sialylated and nonsialylated oligosaccharides bearing alpha2-3- and/or alpha2-6-linked NeuNAc are present.</text>
</comment>
<comment type="similarity">
    <text evidence="5">Belongs to the calycin superfamily. Lipocalin family.</text>
</comment>
<gene>
    <name type="primary">PTGDS</name>
</gene>
<feature type="signal peptide" evidence="4">
    <location>
        <begin position="1"/>
        <end position="24"/>
    </location>
</feature>
<feature type="chain" id="PRO_0000017942" description="Prostaglandin-H2 D-isomerase">
    <location>
        <begin position="25"/>
        <end position="191"/>
    </location>
</feature>
<feature type="active site" description="Nucleophile" evidence="4">
    <location>
        <position position="65"/>
    </location>
</feature>
<feature type="modified residue" description="Pyrrolidone carboxylic acid" evidence="3">
    <location>
        <position position="25"/>
    </location>
</feature>
<feature type="glycosylation site" description="N-linked (GlcNAc...) asparagine" evidence="1">
    <location>
        <position position="51"/>
    </location>
</feature>
<feature type="glycosylation site" description="N-linked (GlcNAc...) asparagine" evidence="1">
    <location>
        <position position="78"/>
    </location>
</feature>
<feature type="disulfide bond" evidence="2">
    <location>
        <begin position="89"/>
        <end position="186"/>
    </location>
</feature>
<reference key="1">
    <citation type="submission" date="1995-12" db="EMBL/GenBank/DDBJ databases">
        <title>Cloning of cat homolog of prostaglandin D synthase.</title>
        <authorList>
            <person name="Irikura D."/>
            <person name="Maruya T."/>
            <person name="Kanaoka Y."/>
            <person name="Urade Y."/>
        </authorList>
    </citation>
    <scope>NUCLEOTIDE SEQUENCE [MRNA]</scope>
</reference>
<sequence>MAALHTLWMGLVLLGVLGVLQTRAQAQVSRQPNFQQDKFLGRWFTSGLASNSSWFREKKNALSMCISVVAPSAEGGLNLTTTFLRKDQCETRTLLLRPAETPGCYSYTSPHWGSTHDVWVVATDYEEYALLYTAGTKSPGQDFHMATLYSRTQTPRAEVKEKFSTFAKTRGFTEDAIVFLPKTERCMEEHR</sequence>
<evidence type="ECO:0000250" key="1"/>
<evidence type="ECO:0000250" key="2">
    <source>
        <dbReference type="UniProtKB" id="O09114"/>
    </source>
</evidence>
<evidence type="ECO:0000250" key="3">
    <source>
        <dbReference type="UniProtKB" id="P22057"/>
    </source>
</evidence>
<evidence type="ECO:0000250" key="4">
    <source>
        <dbReference type="UniProtKB" id="P41222"/>
    </source>
</evidence>
<evidence type="ECO:0000305" key="5"/>
<name>PTGDS_FELCA</name>
<accession>Q29487</accession>
<protein>
    <recommendedName>
        <fullName>Prostaglandin-H2 D-isomerase</fullName>
        <ecNumber evidence="4">5.3.99.2</ecNumber>
    </recommendedName>
    <alternativeName>
        <fullName>Glutathione-independent PGD synthase</fullName>
    </alternativeName>
    <alternativeName>
        <fullName>Lipocalin-type prostaglandin-D synthase</fullName>
    </alternativeName>
    <alternativeName>
        <fullName>Prostaglandin-D2 synthase</fullName>
        <shortName>PGD2 synthase</shortName>
        <shortName>PGDS</shortName>
        <shortName>PGDS2</shortName>
    </alternativeName>
</protein>
<dbReference type="EC" id="5.3.99.2" evidence="4"/>
<dbReference type="EMBL" id="D82048">
    <property type="protein sequence ID" value="BAA11521.1"/>
    <property type="molecule type" value="mRNA"/>
</dbReference>
<dbReference type="RefSeq" id="NP_001009300.1">
    <property type="nucleotide sequence ID" value="NM_001009300.1"/>
</dbReference>
<dbReference type="SMR" id="Q29487"/>
<dbReference type="FunCoup" id="Q29487">
    <property type="interactions" value="2"/>
</dbReference>
<dbReference type="STRING" id="9685.ENSFCAP00000000363"/>
<dbReference type="GlyCosmos" id="Q29487">
    <property type="glycosylation" value="2 sites, No reported glycans"/>
</dbReference>
<dbReference type="PaxDb" id="9685-ENSFCAP00000000363"/>
<dbReference type="GeneID" id="493852"/>
<dbReference type="KEGG" id="fca:493852"/>
<dbReference type="CTD" id="5730"/>
<dbReference type="eggNOG" id="ENOG502S6GK">
    <property type="taxonomic scope" value="Eukaryota"/>
</dbReference>
<dbReference type="InParanoid" id="Q29487"/>
<dbReference type="OrthoDB" id="9048943at2759"/>
<dbReference type="Proteomes" id="UP000011712">
    <property type="component" value="Unplaced"/>
</dbReference>
<dbReference type="GO" id="GO:0005576">
    <property type="term" value="C:extracellular region"/>
    <property type="evidence" value="ECO:0000250"/>
    <property type="project" value="UniProtKB"/>
</dbReference>
<dbReference type="GO" id="GO:0005615">
    <property type="term" value="C:extracellular space"/>
    <property type="evidence" value="ECO:0000250"/>
    <property type="project" value="UniProtKB"/>
</dbReference>
<dbReference type="GO" id="GO:0005794">
    <property type="term" value="C:Golgi apparatus"/>
    <property type="evidence" value="ECO:0000250"/>
    <property type="project" value="UniProtKB"/>
</dbReference>
<dbReference type="GO" id="GO:0031965">
    <property type="term" value="C:nuclear membrane"/>
    <property type="evidence" value="ECO:0007669"/>
    <property type="project" value="UniProtKB-SubCell"/>
</dbReference>
<dbReference type="GO" id="GO:0048471">
    <property type="term" value="C:perinuclear region of cytoplasm"/>
    <property type="evidence" value="ECO:0007669"/>
    <property type="project" value="UniProtKB-SubCell"/>
</dbReference>
<dbReference type="GO" id="GO:0005791">
    <property type="term" value="C:rough endoplasmic reticulum"/>
    <property type="evidence" value="ECO:0000250"/>
    <property type="project" value="UniProtKB"/>
</dbReference>
<dbReference type="GO" id="GO:0004667">
    <property type="term" value="F:prostaglandin-D synthase activity"/>
    <property type="evidence" value="ECO:0000250"/>
    <property type="project" value="UniProtKB"/>
</dbReference>
<dbReference type="GO" id="GO:0005501">
    <property type="term" value="F:retinoid binding"/>
    <property type="evidence" value="ECO:0000250"/>
    <property type="project" value="UniProtKB"/>
</dbReference>
<dbReference type="GO" id="GO:0036094">
    <property type="term" value="F:small molecule binding"/>
    <property type="evidence" value="ECO:0007669"/>
    <property type="project" value="InterPro"/>
</dbReference>
<dbReference type="GO" id="GO:0043303">
    <property type="term" value="P:mast cell degranulation"/>
    <property type="evidence" value="ECO:0007669"/>
    <property type="project" value="UniProtKB-KW"/>
</dbReference>
<dbReference type="GO" id="GO:0001516">
    <property type="term" value="P:prostaglandin biosynthetic process"/>
    <property type="evidence" value="ECO:0000250"/>
    <property type="project" value="UniProtKB"/>
</dbReference>
<dbReference type="GO" id="GO:0045187">
    <property type="term" value="P:regulation of circadian sleep/wake cycle, sleep"/>
    <property type="evidence" value="ECO:0000250"/>
    <property type="project" value="UniProtKB"/>
</dbReference>
<dbReference type="FunFam" id="2.40.128.20:FF:000010">
    <property type="entry name" value="Prostaglandin-H2 D-isomerase"/>
    <property type="match status" value="1"/>
</dbReference>
<dbReference type="Gene3D" id="2.40.128.20">
    <property type="match status" value="1"/>
</dbReference>
<dbReference type="InterPro" id="IPR012674">
    <property type="entry name" value="Calycin"/>
</dbReference>
<dbReference type="InterPro" id="IPR002345">
    <property type="entry name" value="Lipocalin"/>
</dbReference>
<dbReference type="InterPro" id="IPR000566">
    <property type="entry name" value="Lipocln_cytosolic_FA-bd_dom"/>
</dbReference>
<dbReference type="PANTHER" id="PTHR11430">
    <property type="entry name" value="LIPOCALIN"/>
    <property type="match status" value="1"/>
</dbReference>
<dbReference type="PANTHER" id="PTHR11430:SF86">
    <property type="entry name" value="PROSTAGLANDIN-H2 D-ISOMERASE"/>
    <property type="match status" value="1"/>
</dbReference>
<dbReference type="Pfam" id="PF00061">
    <property type="entry name" value="Lipocalin"/>
    <property type="match status" value="1"/>
</dbReference>
<dbReference type="PRINTS" id="PR00179">
    <property type="entry name" value="LIPOCALIN"/>
</dbReference>
<dbReference type="PRINTS" id="PR01254">
    <property type="entry name" value="PGNDSYNTHASE"/>
</dbReference>
<dbReference type="SUPFAM" id="SSF50814">
    <property type="entry name" value="Lipocalins"/>
    <property type="match status" value="1"/>
</dbReference>